<accession>Q9PNI5</accession>
<accession>Q0P9E5</accession>
<sequence>MKSSNLYSKLLNAPKNAPVFLSQNLEADFIVKAYTFGLFPWTSKPVTWWCPDPRCILIPNQIHIQKNMKKFINLYQIKLDYDFLKLITLCRDTRSQSWIDDEFITTYYKLFTQGYAHSLELYENNELIGGIYGLILGKVFFGESMVSIKKNASKVAMIKLCDLLKPYDFIIDCQVYNQHLEFMGAHNISRKEFLNILKEKCNQESGFKNFKDLIT</sequence>
<evidence type="ECO:0000255" key="1">
    <source>
        <dbReference type="HAMAP-Rule" id="MF_00688"/>
    </source>
</evidence>
<gene>
    <name evidence="1" type="primary">aat</name>
    <name type="ordered locus">Cj1109</name>
</gene>
<dbReference type="EC" id="2.3.2.6" evidence="1"/>
<dbReference type="EMBL" id="AL111168">
    <property type="protein sequence ID" value="CAL35226.1"/>
    <property type="molecule type" value="Genomic_DNA"/>
</dbReference>
<dbReference type="PIR" id="H81314">
    <property type="entry name" value="H81314"/>
</dbReference>
<dbReference type="RefSeq" id="WP_002852895.1">
    <property type="nucleotide sequence ID" value="NZ_SZUC01000001.1"/>
</dbReference>
<dbReference type="RefSeq" id="YP_002344502.1">
    <property type="nucleotide sequence ID" value="NC_002163.1"/>
</dbReference>
<dbReference type="SMR" id="Q9PNI5"/>
<dbReference type="IntAct" id="Q9PNI5">
    <property type="interactions" value="8"/>
</dbReference>
<dbReference type="STRING" id="192222.Cj1109"/>
<dbReference type="PaxDb" id="192222-Cj1109"/>
<dbReference type="EnsemblBacteria" id="CAL35226">
    <property type="protein sequence ID" value="CAL35226"/>
    <property type="gene ID" value="Cj1109"/>
</dbReference>
<dbReference type="GeneID" id="905400"/>
<dbReference type="KEGG" id="cje:Cj1109"/>
<dbReference type="PATRIC" id="fig|192222.6.peg.1091"/>
<dbReference type="eggNOG" id="COG2360">
    <property type="taxonomic scope" value="Bacteria"/>
</dbReference>
<dbReference type="HOGENOM" id="CLU_075045_0_1_7"/>
<dbReference type="OrthoDB" id="9790282at2"/>
<dbReference type="Proteomes" id="UP000000799">
    <property type="component" value="Chromosome"/>
</dbReference>
<dbReference type="GO" id="GO:0005737">
    <property type="term" value="C:cytoplasm"/>
    <property type="evidence" value="ECO:0007669"/>
    <property type="project" value="UniProtKB-SubCell"/>
</dbReference>
<dbReference type="GO" id="GO:0008914">
    <property type="term" value="F:leucyl-tRNA--protein transferase activity"/>
    <property type="evidence" value="ECO:0007669"/>
    <property type="project" value="UniProtKB-UniRule"/>
</dbReference>
<dbReference type="GO" id="GO:0030163">
    <property type="term" value="P:protein catabolic process"/>
    <property type="evidence" value="ECO:0007669"/>
    <property type="project" value="UniProtKB-UniRule"/>
</dbReference>
<dbReference type="Gene3D" id="3.40.630.70">
    <property type="entry name" value="Leucyl/phenylalanyl-tRNA-protein transferase, C-terminal domain"/>
    <property type="match status" value="1"/>
</dbReference>
<dbReference type="Gene3D" id="3.30.70.3550">
    <property type="entry name" value="Leucyl/phenylalanyl-tRNA-protein transferase, N-terminal domain"/>
    <property type="match status" value="1"/>
</dbReference>
<dbReference type="HAMAP" id="MF_00688">
    <property type="entry name" value="Leu_Phe_trans"/>
    <property type="match status" value="1"/>
</dbReference>
<dbReference type="InterPro" id="IPR016181">
    <property type="entry name" value="Acyl_CoA_acyltransferase"/>
</dbReference>
<dbReference type="InterPro" id="IPR004616">
    <property type="entry name" value="Leu/Phe-tRNA_Trfase"/>
</dbReference>
<dbReference type="InterPro" id="IPR042203">
    <property type="entry name" value="Leu/Phe-tRNA_Trfase_C"/>
</dbReference>
<dbReference type="InterPro" id="IPR042221">
    <property type="entry name" value="Leu/Phe-tRNA_Trfase_N"/>
</dbReference>
<dbReference type="NCBIfam" id="TIGR00667">
    <property type="entry name" value="aat"/>
    <property type="match status" value="1"/>
</dbReference>
<dbReference type="PANTHER" id="PTHR30098">
    <property type="entry name" value="LEUCYL/PHENYLALANYL-TRNA--PROTEIN TRANSFERASE"/>
    <property type="match status" value="1"/>
</dbReference>
<dbReference type="PANTHER" id="PTHR30098:SF2">
    <property type="entry name" value="LEUCYL_PHENYLALANYL-TRNA--PROTEIN TRANSFERASE"/>
    <property type="match status" value="1"/>
</dbReference>
<dbReference type="Pfam" id="PF03588">
    <property type="entry name" value="Leu_Phe_trans"/>
    <property type="match status" value="1"/>
</dbReference>
<dbReference type="SUPFAM" id="SSF55729">
    <property type="entry name" value="Acyl-CoA N-acyltransferases (Nat)"/>
    <property type="match status" value="1"/>
</dbReference>
<protein>
    <recommendedName>
        <fullName evidence="1">Leucyl/phenylalanyl-tRNA--protein transferase</fullName>
        <ecNumber evidence="1">2.3.2.6</ecNumber>
    </recommendedName>
    <alternativeName>
        <fullName evidence="1">L/F-transferase</fullName>
    </alternativeName>
    <alternativeName>
        <fullName evidence="1">Leucyltransferase</fullName>
    </alternativeName>
    <alternativeName>
        <fullName evidence="1">Phenyalanyltransferase</fullName>
    </alternativeName>
</protein>
<organism>
    <name type="scientific">Campylobacter jejuni subsp. jejuni serotype O:2 (strain ATCC 700819 / NCTC 11168)</name>
    <dbReference type="NCBI Taxonomy" id="192222"/>
    <lineage>
        <taxon>Bacteria</taxon>
        <taxon>Pseudomonadati</taxon>
        <taxon>Campylobacterota</taxon>
        <taxon>Epsilonproteobacteria</taxon>
        <taxon>Campylobacterales</taxon>
        <taxon>Campylobacteraceae</taxon>
        <taxon>Campylobacter</taxon>
    </lineage>
</organism>
<feature type="chain" id="PRO_0000207210" description="Leucyl/phenylalanyl-tRNA--protein transferase">
    <location>
        <begin position="1"/>
        <end position="215"/>
    </location>
</feature>
<keyword id="KW-0012">Acyltransferase</keyword>
<keyword id="KW-0963">Cytoplasm</keyword>
<keyword id="KW-1185">Reference proteome</keyword>
<keyword id="KW-0808">Transferase</keyword>
<proteinExistence type="inferred from homology"/>
<reference key="1">
    <citation type="journal article" date="2000" name="Nature">
        <title>The genome sequence of the food-borne pathogen Campylobacter jejuni reveals hypervariable sequences.</title>
        <authorList>
            <person name="Parkhill J."/>
            <person name="Wren B.W."/>
            <person name="Mungall K.L."/>
            <person name="Ketley J.M."/>
            <person name="Churcher C.M."/>
            <person name="Basham D."/>
            <person name="Chillingworth T."/>
            <person name="Davies R.M."/>
            <person name="Feltwell T."/>
            <person name="Holroyd S."/>
            <person name="Jagels K."/>
            <person name="Karlyshev A.V."/>
            <person name="Moule S."/>
            <person name="Pallen M.J."/>
            <person name="Penn C.W."/>
            <person name="Quail M.A."/>
            <person name="Rajandream M.A."/>
            <person name="Rutherford K.M."/>
            <person name="van Vliet A.H.M."/>
            <person name="Whitehead S."/>
            <person name="Barrell B.G."/>
        </authorList>
    </citation>
    <scope>NUCLEOTIDE SEQUENCE [LARGE SCALE GENOMIC DNA]</scope>
    <source>
        <strain>ATCC 700819 / NCTC 11168</strain>
    </source>
</reference>
<comment type="function">
    <text evidence="1">Functions in the N-end rule pathway of protein degradation where it conjugates Leu, Phe and, less efficiently, Met from aminoacyl-tRNAs to the N-termini of proteins containing an N-terminal arginine or lysine.</text>
</comment>
<comment type="catalytic activity">
    <reaction evidence="1">
        <text>N-terminal L-lysyl-[protein] + L-leucyl-tRNA(Leu) = N-terminal L-leucyl-L-lysyl-[protein] + tRNA(Leu) + H(+)</text>
        <dbReference type="Rhea" id="RHEA:12340"/>
        <dbReference type="Rhea" id="RHEA-COMP:9613"/>
        <dbReference type="Rhea" id="RHEA-COMP:9622"/>
        <dbReference type="Rhea" id="RHEA-COMP:12670"/>
        <dbReference type="Rhea" id="RHEA-COMP:12671"/>
        <dbReference type="ChEBI" id="CHEBI:15378"/>
        <dbReference type="ChEBI" id="CHEBI:65249"/>
        <dbReference type="ChEBI" id="CHEBI:78442"/>
        <dbReference type="ChEBI" id="CHEBI:78494"/>
        <dbReference type="ChEBI" id="CHEBI:133043"/>
        <dbReference type="EC" id="2.3.2.6"/>
    </reaction>
</comment>
<comment type="catalytic activity">
    <reaction evidence="1">
        <text>N-terminal L-arginyl-[protein] + L-leucyl-tRNA(Leu) = N-terminal L-leucyl-L-arginyl-[protein] + tRNA(Leu) + H(+)</text>
        <dbReference type="Rhea" id="RHEA:50416"/>
        <dbReference type="Rhea" id="RHEA-COMP:9613"/>
        <dbReference type="Rhea" id="RHEA-COMP:9622"/>
        <dbReference type="Rhea" id="RHEA-COMP:12672"/>
        <dbReference type="Rhea" id="RHEA-COMP:12673"/>
        <dbReference type="ChEBI" id="CHEBI:15378"/>
        <dbReference type="ChEBI" id="CHEBI:64719"/>
        <dbReference type="ChEBI" id="CHEBI:78442"/>
        <dbReference type="ChEBI" id="CHEBI:78494"/>
        <dbReference type="ChEBI" id="CHEBI:133044"/>
        <dbReference type="EC" id="2.3.2.6"/>
    </reaction>
</comment>
<comment type="catalytic activity">
    <reaction evidence="1">
        <text>L-phenylalanyl-tRNA(Phe) + an N-terminal L-alpha-aminoacyl-[protein] = an N-terminal L-phenylalanyl-L-alpha-aminoacyl-[protein] + tRNA(Phe)</text>
        <dbReference type="Rhea" id="RHEA:43632"/>
        <dbReference type="Rhea" id="RHEA-COMP:9668"/>
        <dbReference type="Rhea" id="RHEA-COMP:9699"/>
        <dbReference type="Rhea" id="RHEA-COMP:10636"/>
        <dbReference type="Rhea" id="RHEA-COMP:10637"/>
        <dbReference type="ChEBI" id="CHEBI:78442"/>
        <dbReference type="ChEBI" id="CHEBI:78531"/>
        <dbReference type="ChEBI" id="CHEBI:78597"/>
        <dbReference type="ChEBI" id="CHEBI:83561"/>
        <dbReference type="EC" id="2.3.2.6"/>
    </reaction>
</comment>
<comment type="subcellular location">
    <subcellularLocation>
        <location evidence="1">Cytoplasm</location>
    </subcellularLocation>
</comment>
<comment type="similarity">
    <text evidence="1">Belongs to the L/F-transferase family.</text>
</comment>
<name>LFTR_CAMJE</name>